<sequence>MSITKEFDTITAISTPLGEGAIGIVRLSGTDALAIAQSVFKGKNLEQVASHTINYGHIIDPKTGTIIDEVMVSVMLAPKTFTRENVVEINTHGGIAVTNEILQLLIRQGARMAEPGEFTKRAFLNGRVDLTQAEAVMDIIRAKTDKAMTIAVKQLDGSLSQLINDTRQEILNTLAQVEVNIDYPEYDDVEEMTTALLREKTQEFQSLLENLLRTAKRGKILREGLSTAIIGRPNVGKSSLLNNLLREDKAIVTDIAGTTRDVIEEYVNIKGVPLKLVDTAGIRETDDLVEQIGVERSKKALQEADLVLLVLNASEKLTDQDRALLNLSQGSNRIILLNKTDLEQKIELEQLPADLISISVLTNQNINLIEDRINQLFFDNAGLVEQDATYLSNARHISLIEKAVQSLEAVNDGLALGMPVDLLQVDLTRTWEILGEITGDAAPDELITQLFSQFCLGK</sequence>
<reference key="1">
    <citation type="journal article" date="2005" name="J. Infect. Dis.">
        <title>Genome sequence of a serotype M28 strain of group A Streptococcus: potential new insights into puerperal sepsis and bacterial disease specificity.</title>
        <authorList>
            <person name="Green N.M."/>
            <person name="Zhang S."/>
            <person name="Porcella S.F."/>
            <person name="Nagiec M.J."/>
            <person name="Barbian K.D."/>
            <person name="Beres S.B."/>
            <person name="Lefebvre R.B."/>
            <person name="Musser J.M."/>
        </authorList>
    </citation>
    <scope>NUCLEOTIDE SEQUENCE [LARGE SCALE GENOMIC DNA]</scope>
    <source>
        <strain>MGAS6180</strain>
    </source>
</reference>
<keyword id="KW-0963">Cytoplasm</keyword>
<keyword id="KW-0342">GTP-binding</keyword>
<keyword id="KW-0378">Hydrolase</keyword>
<keyword id="KW-0460">Magnesium</keyword>
<keyword id="KW-0479">Metal-binding</keyword>
<keyword id="KW-0547">Nucleotide-binding</keyword>
<keyword id="KW-0630">Potassium</keyword>
<keyword id="KW-0819">tRNA processing</keyword>
<feature type="chain" id="PRO_1000048891" description="tRNA modification GTPase MnmE">
    <location>
        <begin position="1"/>
        <end position="458"/>
    </location>
</feature>
<feature type="domain" description="TrmE-type G">
    <location>
        <begin position="224"/>
        <end position="378"/>
    </location>
</feature>
<feature type="binding site" evidence="1">
    <location>
        <position position="26"/>
    </location>
    <ligand>
        <name>(6S)-5-formyl-5,6,7,8-tetrahydrofolate</name>
        <dbReference type="ChEBI" id="CHEBI:57457"/>
    </ligand>
</feature>
<feature type="binding site" evidence="1">
    <location>
        <position position="88"/>
    </location>
    <ligand>
        <name>(6S)-5-formyl-5,6,7,8-tetrahydrofolate</name>
        <dbReference type="ChEBI" id="CHEBI:57457"/>
    </ligand>
</feature>
<feature type="binding site" evidence="1">
    <location>
        <position position="127"/>
    </location>
    <ligand>
        <name>(6S)-5-formyl-5,6,7,8-tetrahydrofolate</name>
        <dbReference type="ChEBI" id="CHEBI:57457"/>
    </ligand>
</feature>
<feature type="binding site" evidence="1">
    <location>
        <begin position="234"/>
        <end position="239"/>
    </location>
    <ligand>
        <name>GTP</name>
        <dbReference type="ChEBI" id="CHEBI:37565"/>
    </ligand>
</feature>
<feature type="binding site" evidence="1">
    <location>
        <position position="234"/>
    </location>
    <ligand>
        <name>K(+)</name>
        <dbReference type="ChEBI" id="CHEBI:29103"/>
    </ligand>
</feature>
<feature type="binding site" evidence="1">
    <location>
        <position position="238"/>
    </location>
    <ligand>
        <name>Mg(2+)</name>
        <dbReference type="ChEBI" id="CHEBI:18420"/>
    </ligand>
</feature>
<feature type="binding site" evidence="1">
    <location>
        <begin position="253"/>
        <end position="259"/>
    </location>
    <ligand>
        <name>GTP</name>
        <dbReference type="ChEBI" id="CHEBI:37565"/>
    </ligand>
</feature>
<feature type="binding site" evidence="1">
    <location>
        <position position="253"/>
    </location>
    <ligand>
        <name>K(+)</name>
        <dbReference type="ChEBI" id="CHEBI:29103"/>
    </ligand>
</feature>
<feature type="binding site" evidence="1">
    <location>
        <position position="255"/>
    </location>
    <ligand>
        <name>K(+)</name>
        <dbReference type="ChEBI" id="CHEBI:29103"/>
    </ligand>
</feature>
<feature type="binding site" evidence="1">
    <location>
        <position position="258"/>
    </location>
    <ligand>
        <name>K(+)</name>
        <dbReference type="ChEBI" id="CHEBI:29103"/>
    </ligand>
</feature>
<feature type="binding site" evidence="1">
    <location>
        <position position="259"/>
    </location>
    <ligand>
        <name>Mg(2+)</name>
        <dbReference type="ChEBI" id="CHEBI:18420"/>
    </ligand>
</feature>
<feature type="binding site" evidence="1">
    <location>
        <begin position="278"/>
        <end position="281"/>
    </location>
    <ligand>
        <name>GTP</name>
        <dbReference type="ChEBI" id="CHEBI:37565"/>
    </ligand>
</feature>
<feature type="binding site" evidence="1">
    <location>
        <position position="458"/>
    </location>
    <ligand>
        <name>(6S)-5-formyl-5,6,7,8-tetrahydrofolate</name>
        <dbReference type="ChEBI" id="CHEBI:57457"/>
    </ligand>
</feature>
<evidence type="ECO:0000255" key="1">
    <source>
        <dbReference type="HAMAP-Rule" id="MF_00379"/>
    </source>
</evidence>
<proteinExistence type="inferred from homology"/>
<name>MNME_STRPM</name>
<comment type="function">
    <text evidence="1">Exhibits a very high intrinsic GTPase hydrolysis rate. Involved in the addition of a carboxymethylaminomethyl (cmnm) group at the wobble position (U34) of certain tRNAs, forming tRNA-cmnm(5)s(2)U34.</text>
</comment>
<comment type="cofactor">
    <cofactor evidence="1">
        <name>K(+)</name>
        <dbReference type="ChEBI" id="CHEBI:29103"/>
    </cofactor>
    <text evidence="1">Binds 1 potassium ion per subunit.</text>
</comment>
<comment type="subunit">
    <text evidence="1">Homodimer. Heterotetramer of two MnmE and two MnmG subunits.</text>
</comment>
<comment type="subcellular location">
    <subcellularLocation>
        <location evidence="1">Cytoplasm</location>
    </subcellularLocation>
</comment>
<comment type="similarity">
    <text evidence="1">Belongs to the TRAFAC class TrmE-Era-EngA-EngB-Septin-like GTPase superfamily. TrmE GTPase family.</text>
</comment>
<protein>
    <recommendedName>
        <fullName evidence="1">tRNA modification GTPase MnmE</fullName>
        <ecNumber evidence="1">3.6.-.-</ecNumber>
    </recommendedName>
</protein>
<accession>Q48TS5</accession>
<gene>
    <name evidence="1" type="primary">mnmE</name>
    <name evidence="1" type="synonym">trmE</name>
    <name type="ordered locus">M28_Spy0768</name>
</gene>
<organism>
    <name type="scientific">Streptococcus pyogenes serotype M28 (strain MGAS6180)</name>
    <dbReference type="NCBI Taxonomy" id="319701"/>
    <lineage>
        <taxon>Bacteria</taxon>
        <taxon>Bacillati</taxon>
        <taxon>Bacillota</taxon>
        <taxon>Bacilli</taxon>
        <taxon>Lactobacillales</taxon>
        <taxon>Streptococcaceae</taxon>
        <taxon>Streptococcus</taxon>
    </lineage>
</organism>
<dbReference type="EC" id="3.6.-.-" evidence="1"/>
<dbReference type="EMBL" id="CP000056">
    <property type="protein sequence ID" value="AAX71881.1"/>
    <property type="molecule type" value="Genomic_DNA"/>
</dbReference>
<dbReference type="RefSeq" id="WP_011284755.1">
    <property type="nucleotide sequence ID" value="NC_007296.2"/>
</dbReference>
<dbReference type="SMR" id="Q48TS5"/>
<dbReference type="KEGG" id="spb:M28_Spy0768"/>
<dbReference type="HOGENOM" id="CLU_019624_4_1_9"/>
<dbReference type="GO" id="GO:0005829">
    <property type="term" value="C:cytosol"/>
    <property type="evidence" value="ECO:0007669"/>
    <property type="project" value="TreeGrafter"/>
</dbReference>
<dbReference type="GO" id="GO:0005525">
    <property type="term" value="F:GTP binding"/>
    <property type="evidence" value="ECO:0007669"/>
    <property type="project" value="UniProtKB-UniRule"/>
</dbReference>
<dbReference type="GO" id="GO:0003924">
    <property type="term" value="F:GTPase activity"/>
    <property type="evidence" value="ECO:0007669"/>
    <property type="project" value="UniProtKB-UniRule"/>
</dbReference>
<dbReference type="GO" id="GO:0046872">
    <property type="term" value="F:metal ion binding"/>
    <property type="evidence" value="ECO:0007669"/>
    <property type="project" value="UniProtKB-KW"/>
</dbReference>
<dbReference type="GO" id="GO:0030488">
    <property type="term" value="P:tRNA methylation"/>
    <property type="evidence" value="ECO:0007669"/>
    <property type="project" value="TreeGrafter"/>
</dbReference>
<dbReference type="GO" id="GO:0002098">
    <property type="term" value="P:tRNA wobble uridine modification"/>
    <property type="evidence" value="ECO:0007669"/>
    <property type="project" value="TreeGrafter"/>
</dbReference>
<dbReference type="CDD" id="cd04164">
    <property type="entry name" value="trmE"/>
    <property type="match status" value="1"/>
</dbReference>
<dbReference type="CDD" id="cd14858">
    <property type="entry name" value="TrmE_N"/>
    <property type="match status" value="1"/>
</dbReference>
<dbReference type="FunFam" id="3.30.1360.120:FF:000003">
    <property type="entry name" value="tRNA modification GTPase MnmE"/>
    <property type="match status" value="1"/>
</dbReference>
<dbReference type="FunFam" id="3.40.50.300:FF:000494">
    <property type="entry name" value="tRNA modification GTPase MnmE"/>
    <property type="match status" value="1"/>
</dbReference>
<dbReference type="Gene3D" id="3.40.50.300">
    <property type="entry name" value="P-loop containing nucleotide triphosphate hydrolases"/>
    <property type="match status" value="1"/>
</dbReference>
<dbReference type="Gene3D" id="3.30.1360.120">
    <property type="entry name" value="Probable tRNA modification gtpase trme, domain 1"/>
    <property type="match status" value="1"/>
</dbReference>
<dbReference type="Gene3D" id="1.20.120.430">
    <property type="entry name" value="tRNA modification GTPase MnmE domain 2"/>
    <property type="match status" value="1"/>
</dbReference>
<dbReference type="HAMAP" id="MF_00379">
    <property type="entry name" value="GTPase_MnmE"/>
    <property type="match status" value="1"/>
</dbReference>
<dbReference type="InterPro" id="IPR031168">
    <property type="entry name" value="G_TrmE"/>
</dbReference>
<dbReference type="InterPro" id="IPR006073">
    <property type="entry name" value="GTP-bd"/>
</dbReference>
<dbReference type="InterPro" id="IPR018948">
    <property type="entry name" value="GTP-bd_TrmE_N"/>
</dbReference>
<dbReference type="InterPro" id="IPR004520">
    <property type="entry name" value="GTPase_MnmE"/>
</dbReference>
<dbReference type="InterPro" id="IPR027368">
    <property type="entry name" value="MnmE_dom2"/>
</dbReference>
<dbReference type="InterPro" id="IPR025867">
    <property type="entry name" value="MnmE_helical"/>
</dbReference>
<dbReference type="InterPro" id="IPR027417">
    <property type="entry name" value="P-loop_NTPase"/>
</dbReference>
<dbReference type="InterPro" id="IPR005225">
    <property type="entry name" value="Small_GTP-bd"/>
</dbReference>
<dbReference type="InterPro" id="IPR027266">
    <property type="entry name" value="TrmE/GcvT_dom1"/>
</dbReference>
<dbReference type="NCBIfam" id="TIGR00450">
    <property type="entry name" value="mnmE_trmE_thdF"/>
    <property type="match status" value="1"/>
</dbReference>
<dbReference type="NCBIfam" id="NF003661">
    <property type="entry name" value="PRK05291.1-3"/>
    <property type="match status" value="1"/>
</dbReference>
<dbReference type="NCBIfam" id="TIGR00231">
    <property type="entry name" value="small_GTP"/>
    <property type="match status" value="1"/>
</dbReference>
<dbReference type="PANTHER" id="PTHR42714">
    <property type="entry name" value="TRNA MODIFICATION GTPASE GTPBP3"/>
    <property type="match status" value="1"/>
</dbReference>
<dbReference type="PANTHER" id="PTHR42714:SF2">
    <property type="entry name" value="TRNA MODIFICATION GTPASE GTPBP3, MITOCHONDRIAL"/>
    <property type="match status" value="1"/>
</dbReference>
<dbReference type="Pfam" id="PF01926">
    <property type="entry name" value="MMR_HSR1"/>
    <property type="match status" value="1"/>
</dbReference>
<dbReference type="Pfam" id="PF12631">
    <property type="entry name" value="MnmE_helical"/>
    <property type="match status" value="1"/>
</dbReference>
<dbReference type="Pfam" id="PF10396">
    <property type="entry name" value="TrmE_N"/>
    <property type="match status" value="1"/>
</dbReference>
<dbReference type="SUPFAM" id="SSF52540">
    <property type="entry name" value="P-loop containing nucleoside triphosphate hydrolases"/>
    <property type="match status" value="1"/>
</dbReference>
<dbReference type="SUPFAM" id="SSF116878">
    <property type="entry name" value="TrmE connector domain"/>
    <property type="match status" value="1"/>
</dbReference>
<dbReference type="PROSITE" id="PS51709">
    <property type="entry name" value="G_TRME"/>
    <property type="match status" value="1"/>
</dbReference>